<protein>
    <recommendedName>
        <fullName evidence="1">Large ribosomal subunit protein bL32</fullName>
    </recommendedName>
    <alternativeName>
        <fullName evidence="3">50S ribosomal protein L32</fullName>
    </alternativeName>
</protein>
<evidence type="ECO:0000255" key="1">
    <source>
        <dbReference type="HAMAP-Rule" id="MF_00340"/>
    </source>
</evidence>
<evidence type="ECO:0000256" key="2">
    <source>
        <dbReference type="SAM" id="MobiDB-lite"/>
    </source>
</evidence>
<evidence type="ECO:0000305" key="3"/>
<sequence>MAVQQNKKSPSKRGMHRSHDFLVNPATAIEPNTGETHLRHHISPNGFYRGRKVLKTKADE</sequence>
<proteinExistence type="inferred from homology"/>
<name>RL32_BORPE</name>
<keyword id="KW-1185">Reference proteome</keyword>
<keyword id="KW-0687">Ribonucleoprotein</keyword>
<keyword id="KW-0689">Ribosomal protein</keyword>
<reference key="1">
    <citation type="journal article" date="2003" name="Nat. Genet.">
        <title>Comparative analysis of the genome sequences of Bordetella pertussis, Bordetella parapertussis and Bordetella bronchiseptica.</title>
        <authorList>
            <person name="Parkhill J."/>
            <person name="Sebaihia M."/>
            <person name="Preston A."/>
            <person name="Murphy L.D."/>
            <person name="Thomson N.R."/>
            <person name="Harris D.E."/>
            <person name="Holden M.T.G."/>
            <person name="Churcher C.M."/>
            <person name="Bentley S.D."/>
            <person name="Mungall K.L."/>
            <person name="Cerdeno-Tarraga A.-M."/>
            <person name="Temple L."/>
            <person name="James K.D."/>
            <person name="Harris B."/>
            <person name="Quail M.A."/>
            <person name="Achtman M."/>
            <person name="Atkin R."/>
            <person name="Baker S."/>
            <person name="Basham D."/>
            <person name="Bason N."/>
            <person name="Cherevach I."/>
            <person name="Chillingworth T."/>
            <person name="Collins M."/>
            <person name="Cronin A."/>
            <person name="Davis P."/>
            <person name="Doggett J."/>
            <person name="Feltwell T."/>
            <person name="Goble A."/>
            <person name="Hamlin N."/>
            <person name="Hauser H."/>
            <person name="Holroyd S."/>
            <person name="Jagels K."/>
            <person name="Leather S."/>
            <person name="Moule S."/>
            <person name="Norberczak H."/>
            <person name="O'Neil S."/>
            <person name="Ormond D."/>
            <person name="Price C."/>
            <person name="Rabbinowitsch E."/>
            <person name="Rutter S."/>
            <person name="Sanders M."/>
            <person name="Saunders D."/>
            <person name="Seeger K."/>
            <person name="Sharp S."/>
            <person name="Simmonds M."/>
            <person name="Skelton J."/>
            <person name="Squares R."/>
            <person name="Squares S."/>
            <person name="Stevens K."/>
            <person name="Unwin L."/>
            <person name="Whitehead S."/>
            <person name="Barrell B.G."/>
            <person name="Maskell D.J."/>
        </authorList>
    </citation>
    <scope>NUCLEOTIDE SEQUENCE [LARGE SCALE GENOMIC DNA]</scope>
    <source>
        <strain>Tohama I / ATCC BAA-589 / NCTC 13251</strain>
    </source>
</reference>
<gene>
    <name evidence="1" type="primary">rpmF</name>
    <name type="ordered locus">BP2445</name>
</gene>
<accession>Q7VW27</accession>
<dbReference type="EMBL" id="BX640418">
    <property type="protein sequence ID" value="CAE42717.1"/>
    <property type="molecule type" value="Genomic_DNA"/>
</dbReference>
<dbReference type="RefSeq" id="NP_881073.1">
    <property type="nucleotide sequence ID" value="NC_002929.2"/>
</dbReference>
<dbReference type="RefSeq" id="WP_003813827.1">
    <property type="nucleotide sequence ID" value="NZ_CP039022.1"/>
</dbReference>
<dbReference type="SMR" id="Q7VW27"/>
<dbReference type="STRING" id="257313.BP2445"/>
<dbReference type="PaxDb" id="257313-BP2445"/>
<dbReference type="GeneID" id="93205091"/>
<dbReference type="KEGG" id="bpe:BP2445"/>
<dbReference type="PATRIC" id="fig|257313.5.peg.2635"/>
<dbReference type="eggNOG" id="COG0333">
    <property type="taxonomic scope" value="Bacteria"/>
</dbReference>
<dbReference type="HOGENOM" id="CLU_129084_2_1_4"/>
<dbReference type="Proteomes" id="UP000002676">
    <property type="component" value="Chromosome"/>
</dbReference>
<dbReference type="GO" id="GO:0015934">
    <property type="term" value="C:large ribosomal subunit"/>
    <property type="evidence" value="ECO:0007669"/>
    <property type="project" value="InterPro"/>
</dbReference>
<dbReference type="GO" id="GO:0003735">
    <property type="term" value="F:structural constituent of ribosome"/>
    <property type="evidence" value="ECO:0007669"/>
    <property type="project" value="InterPro"/>
</dbReference>
<dbReference type="GO" id="GO:0006412">
    <property type="term" value="P:translation"/>
    <property type="evidence" value="ECO:0007669"/>
    <property type="project" value="UniProtKB-UniRule"/>
</dbReference>
<dbReference type="HAMAP" id="MF_00340">
    <property type="entry name" value="Ribosomal_bL32"/>
    <property type="match status" value="1"/>
</dbReference>
<dbReference type="InterPro" id="IPR002677">
    <property type="entry name" value="Ribosomal_bL32"/>
</dbReference>
<dbReference type="InterPro" id="IPR044957">
    <property type="entry name" value="Ribosomal_bL32_bact"/>
</dbReference>
<dbReference type="InterPro" id="IPR011332">
    <property type="entry name" value="Ribosomal_zn-bd"/>
</dbReference>
<dbReference type="NCBIfam" id="TIGR01031">
    <property type="entry name" value="rpmF_bact"/>
    <property type="match status" value="1"/>
</dbReference>
<dbReference type="PANTHER" id="PTHR35534">
    <property type="entry name" value="50S RIBOSOMAL PROTEIN L32"/>
    <property type="match status" value="1"/>
</dbReference>
<dbReference type="PANTHER" id="PTHR35534:SF1">
    <property type="entry name" value="LARGE RIBOSOMAL SUBUNIT PROTEIN BL32"/>
    <property type="match status" value="1"/>
</dbReference>
<dbReference type="Pfam" id="PF01783">
    <property type="entry name" value="Ribosomal_L32p"/>
    <property type="match status" value="1"/>
</dbReference>
<dbReference type="SUPFAM" id="SSF57829">
    <property type="entry name" value="Zn-binding ribosomal proteins"/>
    <property type="match status" value="1"/>
</dbReference>
<feature type="chain" id="PRO_0000172315" description="Large ribosomal subunit protein bL32">
    <location>
        <begin position="1"/>
        <end position="60"/>
    </location>
</feature>
<feature type="region of interest" description="Disordered" evidence="2">
    <location>
        <begin position="1"/>
        <end position="60"/>
    </location>
</feature>
<feature type="compositionally biased region" description="Basic residues" evidence="2">
    <location>
        <begin position="49"/>
        <end position="60"/>
    </location>
</feature>
<comment type="similarity">
    <text evidence="1">Belongs to the bacterial ribosomal protein bL32 family.</text>
</comment>
<organism>
    <name type="scientific">Bordetella pertussis (strain Tohama I / ATCC BAA-589 / NCTC 13251)</name>
    <dbReference type="NCBI Taxonomy" id="257313"/>
    <lineage>
        <taxon>Bacteria</taxon>
        <taxon>Pseudomonadati</taxon>
        <taxon>Pseudomonadota</taxon>
        <taxon>Betaproteobacteria</taxon>
        <taxon>Burkholderiales</taxon>
        <taxon>Alcaligenaceae</taxon>
        <taxon>Bordetella</taxon>
    </lineage>
</organism>